<dbReference type="EMBL" id="AF061274">
    <property type="protein sequence ID" value="AAC15774.1"/>
    <property type="molecule type" value="mRNA"/>
</dbReference>
<dbReference type="EMBL" id="AK028105">
    <property type="protein sequence ID" value="BAC25750.1"/>
    <property type="molecule type" value="mRNA"/>
</dbReference>
<dbReference type="EMBL" id="BC068266">
    <property type="protein sequence ID" value="AAH68266.1"/>
    <property type="molecule type" value="mRNA"/>
</dbReference>
<dbReference type="EMBL" id="BC090985">
    <property type="protein sequence ID" value="AAH90985.1"/>
    <property type="molecule type" value="mRNA"/>
</dbReference>
<dbReference type="CCDS" id="CCDS29931.1"/>
<dbReference type="RefSeq" id="NP_061362.1">
    <property type="nucleotide sequence ID" value="NM_018874.2"/>
</dbReference>
<dbReference type="SMR" id="Q5BKQ4"/>
<dbReference type="FunCoup" id="Q5BKQ4">
    <property type="interactions" value="322"/>
</dbReference>
<dbReference type="STRING" id="10090.ENSMUSP00000045465"/>
<dbReference type="ESTHER" id="mouse-1plrp">
    <property type="family name" value="Pancreatic_lipase"/>
</dbReference>
<dbReference type="GlyGen" id="Q5BKQ4">
    <property type="glycosylation" value="1 site, 1 N-linked glycan (1 site)"/>
</dbReference>
<dbReference type="PhosphoSitePlus" id="Q5BKQ4"/>
<dbReference type="CPTAC" id="non-CPTAC-3721"/>
<dbReference type="PaxDb" id="10090-ENSMUSP00000045465"/>
<dbReference type="PeptideAtlas" id="Q5BKQ4"/>
<dbReference type="ProteomicsDB" id="292262"/>
<dbReference type="Antibodypedia" id="35303">
    <property type="antibodies" value="77 antibodies from 17 providers"/>
</dbReference>
<dbReference type="DNASU" id="18946"/>
<dbReference type="Ensembl" id="ENSMUST00000048644.6">
    <property type="protein sequence ID" value="ENSMUSP00000045465.6"/>
    <property type="gene ID" value="ENSMUSG00000042179.7"/>
</dbReference>
<dbReference type="GeneID" id="18946"/>
<dbReference type="KEGG" id="mmu:18946"/>
<dbReference type="UCSC" id="uc008iat.1">
    <property type="organism name" value="mouse"/>
</dbReference>
<dbReference type="AGR" id="MGI:97723"/>
<dbReference type="CTD" id="5407"/>
<dbReference type="MGI" id="MGI:97723">
    <property type="gene designation" value="Pnliprp1"/>
</dbReference>
<dbReference type="VEuPathDB" id="HostDB:ENSMUSG00000042179"/>
<dbReference type="eggNOG" id="ENOG502QUK7">
    <property type="taxonomic scope" value="Eukaryota"/>
</dbReference>
<dbReference type="GeneTree" id="ENSGT00940000162375"/>
<dbReference type="HOGENOM" id="CLU_027171_0_2_1"/>
<dbReference type="InParanoid" id="Q5BKQ4"/>
<dbReference type="OMA" id="WSGTRDF"/>
<dbReference type="OrthoDB" id="199913at2759"/>
<dbReference type="PhylomeDB" id="Q5BKQ4"/>
<dbReference type="TreeFam" id="TF324997"/>
<dbReference type="Reactome" id="R-MMU-192456">
    <property type="pathway name" value="Digestion of dietary lipid"/>
</dbReference>
<dbReference type="BioGRID-ORCS" id="18946">
    <property type="hits" value="2 hits in 79 CRISPR screens"/>
</dbReference>
<dbReference type="ChiTaRS" id="Pnliprp1">
    <property type="organism name" value="mouse"/>
</dbReference>
<dbReference type="PRO" id="PR:Q5BKQ4"/>
<dbReference type="Proteomes" id="UP000000589">
    <property type="component" value="Chromosome 19"/>
</dbReference>
<dbReference type="RNAct" id="Q5BKQ4">
    <property type="molecule type" value="protein"/>
</dbReference>
<dbReference type="Bgee" id="ENSMUSG00000042179">
    <property type="expression patterns" value="Expressed in lacrimal gland and 66 other cell types or tissues"/>
</dbReference>
<dbReference type="ExpressionAtlas" id="Q5BKQ4">
    <property type="expression patterns" value="baseline and differential"/>
</dbReference>
<dbReference type="GO" id="GO:0005576">
    <property type="term" value="C:extracellular region"/>
    <property type="evidence" value="ECO:0007669"/>
    <property type="project" value="UniProtKB-SubCell"/>
</dbReference>
<dbReference type="GO" id="GO:0005509">
    <property type="term" value="F:calcium ion binding"/>
    <property type="evidence" value="ECO:0000250"/>
    <property type="project" value="UniProtKB"/>
</dbReference>
<dbReference type="GO" id="GO:0004806">
    <property type="term" value="F:triacylglycerol lipase activity"/>
    <property type="evidence" value="ECO:0007669"/>
    <property type="project" value="InterPro"/>
</dbReference>
<dbReference type="GO" id="GO:0006629">
    <property type="term" value="P:lipid metabolic process"/>
    <property type="evidence" value="ECO:0007669"/>
    <property type="project" value="InterPro"/>
</dbReference>
<dbReference type="CDD" id="cd00707">
    <property type="entry name" value="Pancreat_lipase_like"/>
    <property type="match status" value="1"/>
</dbReference>
<dbReference type="CDD" id="cd01759">
    <property type="entry name" value="PLAT_PL"/>
    <property type="match status" value="1"/>
</dbReference>
<dbReference type="FunFam" id="3.40.50.1820:FF:000033">
    <property type="entry name" value="Pancreatic triacylglycerol lipase"/>
    <property type="match status" value="1"/>
</dbReference>
<dbReference type="FunFam" id="2.60.60.20:FF:000003">
    <property type="entry name" value="Triacylglycerol lipase"/>
    <property type="match status" value="1"/>
</dbReference>
<dbReference type="Gene3D" id="3.40.50.1820">
    <property type="entry name" value="alpha/beta hydrolase"/>
    <property type="match status" value="1"/>
</dbReference>
<dbReference type="Gene3D" id="2.60.60.20">
    <property type="entry name" value="PLAT/LH2 domain"/>
    <property type="match status" value="1"/>
</dbReference>
<dbReference type="InterPro" id="IPR029058">
    <property type="entry name" value="AB_hydrolase_fold"/>
</dbReference>
<dbReference type="InterPro" id="IPR013818">
    <property type="entry name" value="Lipase"/>
</dbReference>
<dbReference type="InterPro" id="IPR016272">
    <property type="entry name" value="Lipase_LIPH"/>
</dbReference>
<dbReference type="InterPro" id="IPR033906">
    <property type="entry name" value="Lipase_N"/>
</dbReference>
<dbReference type="InterPro" id="IPR002331">
    <property type="entry name" value="Lipase_panc"/>
</dbReference>
<dbReference type="InterPro" id="IPR001024">
    <property type="entry name" value="PLAT/LH2_dom"/>
</dbReference>
<dbReference type="InterPro" id="IPR036392">
    <property type="entry name" value="PLAT/LH2_dom_sf"/>
</dbReference>
<dbReference type="InterPro" id="IPR000734">
    <property type="entry name" value="TAG_lipase"/>
</dbReference>
<dbReference type="PANTHER" id="PTHR11610:SF108">
    <property type="entry name" value="INACTIVE PANCREATIC LIPASE-RELATED PROTEIN 1"/>
    <property type="match status" value="1"/>
</dbReference>
<dbReference type="PANTHER" id="PTHR11610">
    <property type="entry name" value="LIPASE"/>
    <property type="match status" value="1"/>
</dbReference>
<dbReference type="Pfam" id="PF00151">
    <property type="entry name" value="Lipase"/>
    <property type="match status" value="1"/>
</dbReference>
<dbReference type="Pfam" id="PF01477">
    <property type="entry name" value="PLAT"/>
    <property type="match status" value="1"/>
</dbReference>
<dbReference type="PIRSF" id="PIRSF000865">
    <property type="entry name" value="Lipoprotein_lipase_LIPH"/>
    <property type="match status" value="1"/>
</dbReference>
<dbReference type="PRINTS" id="PR00823">
    <property type="entry name" value="PANCLIPASE"/>
</dbReference>
<dbReference type="PRINTS" id="PR00821">
    <property type="entry name" value="TAGLIPASE"/>
</dbReference>
<dbReference type="SMART" id="SM00308">
    <property type="entry name" value="LH2"/>
    <property type="match status" value="1"/>
</dbReference>
<dbReference type="SUPFAM" id="SSF53474">
    <property type="entry name" value="alpha/beta-Hydrolases"/>
    <property type="match status" value="1"/>
</dbReference>
<dbReference type="SUPFAM" id="SSF49723">
    <property type="entry name" value="Lipase/lipooxygenase domain (PLAT/LH2 domain)"/>
    <property type="match status" value="1"/>
</dbReference>
<dbReference type="PROSITE" id="PS00120">
    <property type="entry name" value="LIPASE_SER"/>
    <property type="match status" value="1"/>
</dbReference>
<dbReference type="PROSITE" id="PS50095">
    <property type="entry name" value="PLAT"/>
    <property type="match status" value="1"/>
</dbReference>
<gene>
    <name type="primary">Pnliprp1</name>
</gene>
<evidence type="ECO:0000250" key="1"/>
<evidence type="ECO:0000255" key="2"/>
<evidence type="ECO:0000255" key="3">
    <source>
        <dbReference type="PROSITE-ProRule" id="PRU00152"/>
    </source>
</evidence>
<evidence type="ECO:0000255" key="4">
    <source>
        <dbReference type="PROSITE-ProRule" id="PRU10037"/>
    </source>
</evidence>
<evidence type="ECO:0000269" key="5">
    <source>
    </source>
</evidence>
<evidence type="ECO:0000269" key="6">
    <source>
    </source>
</evidence>
<evidence type="ECO:0000305" key="7"/>
<sequence>MLILWTIPLFLLGAAQGKEVCYDNLGCFSDAEPWAGTAIRPLKLLPWSPEKINTRFLLYTNENPTAFQTLQLSDPSTIEASNFQVARKTRFIIHGFIDKGEENWVVDMCKNMFQVEEVNCICVDWKRGSQTTYTQAANNVRVVGAQVAQMIDILVRNFNYSASKVHLIGHSLGAHVAGEAGSRTPGLGRITGLDPVEANFEGTPEEVRLDPSDADFVDVIHTDAAPLIPFLGFGTNQMVGHFDFFPNGGQYMPGCKKNALSQIVDIDGIWSGTRDFVACNHLRSYKYYLESILNPDGFAAYPCASYRDFESNKCFPCPDQGCPQMGHYADKFANNTSVEPQKFFLNTGEAKNFARWRYRVSLTFSGRTVTGQVKVSLFGSNGNTRQCDIFRGIIKPGATHSNEFDAKLDVGTIEKVKFLWNNHVVNPSFPKVGAAKITVQKGEERTEHNFCSEETVREDILLTLLPCKTSDTM</sequence>
<protein>
    <recommendedName>
        <fullName>Inactive pancreatic lipase-related protein 1</fullName>
        <shortName>PL-RP1</shortName>
    </recommendedName>
</protein>
<organism>
    <name type="scientific">Mus musculus</name>
    <name type="common">Mouse</name>
    <dbReference type="NCBI Taxonomy" id="10090"/>
    <lineage>
        <taxon>Eukaryota</taxon>
        <taxon>Metazoa</taxon>
        <taxon>Chordata</taxon>
        <taxon>Craniata</taxon>
        <taxon>Vertebrata</taxon>
        <taxon>Euteleostomi</taxon>
        <taxon>Mammalia</taxon>
        <taxon>Eutheria</taxon>
        <taxon>Euarchontoglires</taxon>
        <taxon>Glires</taxon>
        <taxon>Rodentia</taxon>
        <taxon>Myomorpha</taxon>
        <taxon>Muroidea</taxon>
        <taxon>Muridae</taxon>
        <taxon>Murinae</taxon>
        <taxon>Mus</taxon>
        <taxon>Mus</taxon>
    </lineage>
</organism>
<feature type="signal peptide" evidence="2">
    <location>
        <begin position="1"/>
        <end position="17"/>
    </location>
</feature>
<feature type="chain" id="PRO_0000017791" description="Inactive pancreatic lipase-related protein 1">
    <location>
        <begin position="18"/>
        <end position="473"/>
    </location>
</feature>
<feature type="domain" description="PLAT" evidence="3">
    <location>
        <begin position="356"/>
        <end position="467"/>
    </location>
</feature>
<feature type="active site" description="Nucleophile" evidence="1">
    <location>
        <position position="171"/>
    </location>
</feature>
<feature type="active site" description="Charge relay system" evidence="4">
    <location>
        <position position="194"/>
    </location>
</feature>
<feature type="active site" description="Charge relay system" evidence="4">
    <location>
        <position position="281"/>
    </location>
</feature>
<feature type="binding site" evidence="1">
    <location>
        <position position="205"/>
    </location>
    <ligand>
        <name>Ca(2+)</name>
        <dbReference type="ChEBI" id="CHEBI:29108"/>
    </ligand>
</feature>
<feature type="binding site" evidence="1">
    <location>
        <position position="208"/>
    </location>
    <ligand>
        <name>Ca(2+)</name>
        <dbReference type="ChEBI" id="CHEBI:29108"/>
    </ligand>
</feature>
<feature type="binding site" evidence="1">
    <location>
        <position position="210"/>
    </location>
    <ligand>
        <name>Ca(2+)</name>
        <dbReference type="ChEBI" id="CHEBI:29108"/>
    </ligand>
</feature>
<feature type="binding site" evidence="1">
    <location>
        <position position="213"/>
    </location>
    <ligand>
        <name>Ca(2+)</name>
        <dbReference type="ChEBI" id="CHEBI:29108"/>
    </ligand>
</feature>
<feature type="disulfide bond" evidence="3">
    <location>
        <begin position="21"/>
        <end position="27"/>
    </location>
</feature>
<feature type="disulfide bond" evidence="3">
    <location>
        <begin position="109"/>
        <end position="120"/>
    </location>
</feature>
<feature type="disulfide bond" evidence="3">
    <location>
        <begin position="255"/>
        <end position="279"/>
    </location>
</feature>
<feature type="disulfide bond" evidence="3">
    <location>
        <begin position="303"/>
        <end position="314"/>
    </location>
</feature>
<feature type="disulfide bond" evidence="3">
    <location>
        <begin position="317"/>
        <end position="322"/>
    </location>
</feature>
<feature type="disulfide bond" evidence="3">
    <location>
        <begin position="451"/>
        <end position="467"/>
    </location>
</feature>
<feature type="sequence conflict" description="In Ref. 3; AAH90985." evidence="7" ref="3">
    <original>Y</original>
    <variation>H</variation>
    <location>
        <position position="59"/>
    </location>
</feature>
<feature type="sequence conflict" description="In Ref. 2; AAH68266." evidence="7" ref="2">
    <original>IDKGEENWVVDMCKNMFQV</original>
    <variation>RPTSWPPGPSSGNNAEYAG</variation>
    <location>
        <begin position="97"/>
        <end position="115"/>
    </location>
</feature>
<feature type="sequence conflict" description="In Ref. 2; AAH68266." evidence="7" ref="2">
    <original>NYS</original>
    <variation>KYY</variation>
    <location>
        <begin position="159"/>
        <end position="161"/>
    </location>
</feature>
<feature type="sequence conflict" description="In Ref. 3; AAH90985." evidence="7" ref="3">
    <original>N</original>
    <variation>D</variation>
    <location>
        <position position="159"/>
    </location>
</feature>
<feature type="sequence conflict" description="In Ref. 2; AAH68266." evidence="7" ref="2">
    <original>L</original>
    <variation>P</variation>
    <location>
        <position position="282"/>
    </location>
</feature>
<feature type="sequence conflict" description="In Ref. 2; AAH68266." evidence="7" ref="2">
    <original>K</original>
    <variation>R</variation>
    <location>
        <position position="351"/>
    </location>
</feature>
<feature type="sequence conflict" description="In Ref. 2; AAH68266." evidence="7" ref="2">
    <original>K</original>
    <variation>E</variation>
    <location>
        <position position="407"/>
    </location>
</feature>
<accession>Q5BKQ4</accession>
<accession>O70478</accession>
<accession>Q6NV82</accession>
<keyword id="KW-0106">Calcium</keyword>
<keyword id="KW-1015">Disulfide bond</keyword>
<keyword id="KW-0479">Metal-binding</keyword>
<keyword id="KW-1185">Reference proteome</keyword>
<keyword id="KW-0964">Secreted</keyword>
<keyword id="KW-0732">Signal</keyword>
<name>LIPR1_MOUSE</name>
<comment type="function">
    <text evidence="1">May function as inhibitor of dietary triglyceride digestion. Lacks detectable lipase activity (in vitro) (By similarity).</text>
</comment>
<comment type="subcellular location">
    <subcellularLocation>
        <location evidence="5">Secreted</location>
    </subcellularLocation>
    <text>Secreted in acinar cells.</text>
</comment>
<comment type="tissue specificity">
    <text evidence="5">Expressed in female, but not in male, lacrimal gland. Expressed in male and female sublingual gland and pancreas.</text>
</comment>
<comment type="disruption phenotype">
    <text evidence="6">Mice have no visible phenotype during the first 10 weeks after birth and are fertile. Adult mice have normal body weight, but higher than normal body fat and lower than normal lean mass. They display impaired glucose tolerance and decreased insulin sensitivity, and obesity and insulin resistance are exacerbated by high-fat diet. Their pancreatic juice has greater ability to hydrolyze triglycerides than that from wild-type littermates.</text>
</comment>
<comment type="miscellaneous">
    <text>Expression is gender and species-specific.</text>
</comment>
<comment type="similarity">
    <text evidence="7">Belongs to the AB hydrolase superfamily. Lipase family.</text>
</comment>
<proteinExistence type="evidence at protein level"/>
<reference key="1">
    <citation type="journal article" date="1999" name="Invest. Ophthalmol. Vis. Sci.">
        <title>Pancreatic lipase-related protein 1 mRNA in female mouse lacrimal gland.</title>
        <authorList>
            <person name="Remington S.G."/>
            <person name="Lima P.H."/>
            <person name="Nelson J.D."/>
        </authorList>
    </citation>
    <scope>NUCLEOTIDE SEQUENCE [MRNA]</scope>
    <scope>SUBCELLULAR LOCATION</scope>
    <scope>TISSUE SPECIFICITY</scope>
    <source>
        <strain>Swiss Webster</strain>
        <tissue>Lacrimal gland</tissue>
    </source>
</reference>
<reference key="2">
    <citation type="journal article" date="2005" name="Science">
        <title>The transcriptional landscape of the mammalian genome.</title>
        <authorList>
            <person name="Carninci P."/>
            <person name="Kasukawa T."/>
            <person name="Katayama S."/>
            <person name="Gough J."/>
            <person name="Frith M.C."/>
            <person name="Maeda N."/>
            <person name="Oyama R."/>
            <person name="Ravasi T."/>
            <person name="Lenhard B."/>
            <person name="Wells C."/>
            <person name="Kodzius R."/>
            <person name="Shimokawa K."/>
            <person name="Bajic V.B."/>
            <person name="Brenner S.E."/>
            <person name="Batalov S."/>
            <person name="Forrest A.R."/>
            <person name="Zavolan M."/>
            <person name="Davis M.J."/>
            <person name="Wilming L.G."/>
            <person name="Aidinis V."/>
            <person name="Allen J.E."/>
            <person name="Ambesi-Impiombato A."/>
            <person name="Apweiler R."/>
            <person name="Aturaliya R.N."/>
            <person name="Bailey T.L."/>
            <person name="Bansal M."/>
            <person name="Baxter L."/>
            <person name="Beisel K.W."/>
            <person name="Bersano T."/>
            <person name="Bono H."/>
            <person name="Chalk A.M."/>
            <person name="Chiu K.P."/>
            <person name="Choudhary V."/>
            <person name="Christoffels A."/>
            <person name="Clutterbuck D.R."/>
            <person name="Crowe M.L."/>
            <person name="Dalla E."/>
            <person name="Dalrymple B.P."/>
            <person name="de Bono B."/>
            <person name="Della Gatta G."/>
            <person name="di Bernardo D."/>
            <person name="Down T."/>
            <person name="Engstrom P."/>
            <person name="Fagiolini M."/>
            <person name="Faulkner G."/>
            <person name="Fletcher C.F."/>
            <person name="Fukushima T."/>
            <person name="Furuno M."/>
            <person name="Futaki S."/>
            <person name="Gariboldi M."/>
            <person name="Georgii-Hemming P."/>
            <person name="Gingeras T.R."/>
            <person name="Gojobori T."/>
            <person name="Green R.E."/>
            <person name="Gustincich S."/>
            <person name="Harbers M."/>
            <person name="Hayashi Y."/>
            <person name="Hensch T.K."/>
            <person name="Hirokawa N."/>
            <person name="Hill D."/>
            <person name="Huminiecki L."/>
            <person name="Iacono M."/>
            <person name="Ikeo K."/>
            <person name="Iwama A."/>
            <person name="Ishikawa T."/>
            <person name="Jakt M."/>
            <person name="Kanapin A."/>
            <person name="Katoh M."/>
            <person name="Kawasawa Y."/>
            <person name="Kelso J."/>
            <person name="Kitamura H."/>
            <person name="Kitano H."/>
            <person name="Kollias G."/>
            <person name="Krishnan S.P."/>
            <person name="Kruger A."/>
            <person name="Kummerfeld S.K."/>
            <person name="Kurochkin I.V."/>
            <person name="Lareau L.F."/>
            <person name="Lazarevic D."/>
            <person name="Lipovich L."/>
            <person name="Liu J."/>
            <person name="Liuni S."/>
            <person name="McWilliam S."/>
            <person name="Madan Babu M."/>
            <person name="Madera M."/>
            <person name="Marchionni L."/>
            <person name="Matsuda H."/>
            <person name="Matsuzawa S."/>
            <person name="Miki H."/>
            <person name="Mignone F."/>
            <person name="Miyake S."/>
            <person name="Morris K."/>
            <person name="Mottagui-Tabar S."/>
            <person name="Mulder N."/>
            <person name="Nakano N."/>
            <person name="Nakauchi H."/>
            <person name="Ng P."/>
            <person name="Nilsson R."/>
            <person name="Nishiguchi S."/>
            <person name="Nishikawa S."/>
            <person name="Nori F."/>
            <person name="Ohara O."/>
            <person name="Okazaki Y."/>
            <person name="Orlando V."/>
            <person name="Pang K.C."/>
            <person name="Pavan W.J."/>
            <person name="Pavesi G."/>
            <person name="Pesole G."/>
            <person name="Petrovsky N."/>
            <person name="Piazza S."/>
            <person name="Reed J."/>
            <person name="Reid J.F."/>
            <person name="Ring B.Z."/>
            <person name="Ringwald M."/>
            <person name="Rost B."/>
            <person name="Ruan Y."/>
            <person name="Salzberg S.L."/>
            <person name="Sandelin A."/>
            <person name="Schneider C."/>
            <person name="Schoenbach C."/>
            <person name="Sekiguchi K."/>
            <person name="Semple C.A."/>
            <person name="Seno S."/>
            <person name="Sessa L."/>
            <person name="Sheng Y."/>
            <person name="Shibata Y."/>
            <person name="Shimada H."/>
            <person name="Shimada K."/>
            <person name="Silva D."/>
            <person name="Sinclair B."/>
            <person name="Sperling S."/>
            <person name="Stupka E."/>
            <person name="Sugiura K."/>
            <person name="Sultana R."/>
            <person name="Takenaka Y."/>
            <person name="Taki K."/>
            <person name="Tammoja K."/>
            <person name="Tan S.L."/>
            <person name="Tang S."/>
            <person name="Taylor M.S."/>
            <person name="Tegner J."/>
            <person name="Teichmann S.A."/>
            <person name="Ueda H.R."/>
            <person name="van Nimwegen E."/>
            <person name="Verardo R."/>
            <person name="Wei C.L."/>
            <person name="Yagi K."/>
            <person name="Yamanishi H."/>
            <person name="Zabarovsky E."/>
            <person name="Zhu S."/>
            <person name="Zimmer A."/>
            <person name="Hide W."/>
            <person name="Bult C."/>
            <person name="Grimmond S.M."/>
            <person name="Teasdale R.D."/>
            <person name="Liu E.T."/>
            <person name="Brusic V."/>
            <person name="Quackenbush J."/>
            <person name="Wahlestedt C."/>
            <person name="Mattick J.S."/>
            <person name="Hume D.A."/>
            <person name="Kai C."/>
            <person name="Sasaki D."/>
            <person name="Tomaru Y."/>
            <person name="Fukuda S."/>
            <person name="Kanamori-Katayama M."/>
            <person name="Suzuki M."/>
            <person name="Aoki J."/>
            <person name="Arakawa T."/>
            <person name="Iida J."/>
            <person name="Imamura K."/>
            <person name="Itoh M."/>
            <person name="Kato T."/>
            <person name="Kawaji H."/>
            <person name="Kawagashira N."/>
            <person name="Kawashima T."/>
            <person name="Kojima M."/>
            <person name="Kondo S."/>
            <person name="Konno H."/>
            <person name="Nakano K."/>
            <person name="Ninomiya N."/>
            <person name="Nishio T."/>
            <person name="Okada M."/>
            <person name="Plessy C."/>
            <person name="Shibata K."/>
            <person name="Shiraki T."/>
            <person name="Suzuki S."/>
            <person name="Tagami M."/>
            <person name="Waki K."/>
            <person name="Watahiki A."/>
            <person name="Okamura-Oho Y."/>
            <person name="Suzuki H."/>
            <person name="Kawai J."/>
            <person name="Hayashizaki Y."/>
        </authorList>
    </citation>
    <scope>NUCLEOTIDE SEQUENCE [LARGE SCALE MRNA]</scope>
    <source>
        <strain>C57BL/6J</strain>
        <tissue>Pancreas</tissue>
    </source>
</reference>
<reference key="3">
    <citation type="journal article" date="2004" name="Genome Res.">
        <title>The status, quality, and expansion of the NIH full-length cDNA project: the Mammalian Gene Collection (MGC).</title>
        <authorList>
            <consortium name="The MGC Project Team"/>
        </authorList>
    </citation>
    <scope>NUCLEOTIDE SEQUENCE [LARGE SCALE MRNA]</scope>
    <source>
        <tissue>Liver</tissue>
    </source>
</reference>
<reference key="4">
    <citation type="journal article" date="2010" name="Cell">
        <title>A tissue-specific atlas of mouse protein phosphorylation and expression.</title>
        <authorList>
            <person name="Huttlin E.L."/>
            <person name="Jedrychowski M.P."/>
            <person name="Elias J.E."/>
            <person name="Goswami T."/>
            <person name="Rad R."/>
            <person name="Beausoleil S.A."/>
            <person name="Villen J."/>
            <person name="Haas W."/>
            <person name="Sowa M.E."/>
            <person name="Gygi S.P."/>
        </authorList>
    </citation>
    <scope>IDENTIFICATION BY MASS SPECTROMETRY [LARGE SCALE ANALYSIS]</scope>
    <source>
        <tissue>Liver</tissue>
        <tissue>Lung</tissue>
        <tissue>Pancreas</tissue>
        <tissue>Spleen</tissue>
    </source>
</reference>
<reference key="5">
    <citation type="journal article" date="2011" name="J. Nutr. Biochem.">
        <title>Increased fat mass and insulin resistance in mice lacking pancreatic lipase-related protein 1.</title>
        <authorList>
            <person name="Ren J."/>
            <person name="Chen Z."/>
            <person name="Zhang W."/>
            <person name="Li L."/>
            <person name="Sun R."/>
            <person name="Deng C."/>
            <person name="Fei Z."/>
            <person name="Sheng Z."/>
            <person name="Wang L."/>
            <person name="Sun X."/>
            <person name="Wang Z."/>
            <person name="Fei J."/>
        </authorList>
    </citation>
    <scope>DISRUPTION PHENOTYPE</scope>
</reference>